<keyword id="KW-0687">Ribonucleoprotein</keyword>
<keyword id="KW-0690">Ribosome biogenesis</keyword>
<keyword id="KW-0698">rRNA processing</keyword>
<dbReference type="EMBL" id="CP000855">
    <property type="protein sequence ID" value="ACJ15723.1"/>
    <property type="molecule type" value="Genomic_DNA"/>
</dbReference>
<dbReference type="RefSeq" id="WP_012571196.1">
    <property type="nucleotide sequence ID" value="NC_011529.1"/>
</dbReference>
<dbReference type="SMR" id="B6YT36"/>
<dbReference type="STRING" id="523850.TON_0238"/>
<dbReference type="GeneID" id="7017900"/>
<dbReference type="KEGG" id="ton:TON_0238"/>
<dbReference type="PATRIC" id="fig|523850.10.peg.240"/>
<dbReference type="eggNOG" id="arCOG00906">
    <property type="taxonomic scope" value="Archaea"/>
</dbReference>
<dbReference type="HOGENOM" id="CLU_196480_1_0_2"/>
<dbReference type="OrthoDB" id="7259at2157"/>
<dbReference type="Proteomes" id="UP000002727">
    <property type="component" value="Chromosome"/>
</dbReference>
<dbReference type="GO" id="GO:1990904">
    <property type="term" value="C:ribonucleoprotein complex"/>
    <property type="evidence" value="ECO:0007669"/>
    <property type="project" value="UniProtKB-KW"/>
</dbReference>
<dbReference type="GO" id="GO:0030515">
    <property type="term" value="F:snoRNA binding"/>
    <property type="evidence" value="ECO:0007669"/>
    <property type="project" value="InterPro"/>
</dbReference>
<dbReference type="GO" id="GO:0001522">
    <property type="term" value="P:pseudouridine synthesis"/>
    <property type="evidence" value="ECO:0007669"/>
    <property type="project" value="InterPro"/>
</dbReference>
<dbReference type="GO" id="GO:0006364">
    <property type="term" value="P:rRNA processing"/>
    <property type="evidence" value="ECO:0007669"/>
    <property type="project" value="UniProtKB-UniRule"/>
</dbReference>
<dbReference type="Gene3D" id="2.20.28.40">
    <property type="entry name" value="H/ACA ribonucleoprotein complex, subunit Nop10"/>
    <property type="match status" value="1"/>
</dbReference>
<dbReference type="HAMAP" id="MF_00803">
    <property type="entry name" value="Nop10"/>
    <property type="match status" value="1"/>
</dbReference>
<dbReference type="InterPro" id="IPR007264">
    <property type="entry name" value="H/ACA_rnp_Nop10"/>
</dbReference>
<dbReference type="InterPro" id="IPR036756">
    <property type="entry name" value="H/ACA_rnp_Nop10_sf"/>
</dbReference>
<dbReference type="InterPro" id="IPR023532">
    <property type="entry name" value="Nop10_arc-typ"/>
</dbReference>
<dbReference type="NCBIfam" id="NF009623">
    <property type="entry name" value="PRK13130.1"/>
    <property type="match status" value="1"/>
</dbReference>
<dbReference type="PANTHER" id="PTHR13305:SF0">
    <property type="entry name" value="H_ACA RIBONUCLEOPROTEIN COMPLEX SUBUNIT 3"/>
    <property type="match status" value="1"/>
</dbReference>
<dbReference type="PANTHER" id="PTHR13305">
    <property type="entry name" value="RIBOSOME BIOGENESIS PROTEIN NOP10"/>
    <property type="match status" value="1"/>
</dbReference>
<dbReference type="Pfam" id="PF04135">
    <property type="entry name" value="Nop10p"/>
    <property type="match status" value="1"/>
</dbReference>
<dbReference type="SUPFAM" id="SSF144210">
    <property type="entry name" value="Nop10-like SnoRNP"/>
    <property type="match status" value="1"/>
</dbReference>
<feature type="chain" id="PRO_1000133932" description="Ribosome biogenesis protein Nop10">
    <location>
        <begin position="1"/>
        <end position="58"/>
    </location>
</feature>
<proteinExistence type="inferred from homology"/>
<sequence>MRFRIRKCPSCGRYTLKETCPVCGTKTKIAHPPRFSPEDPYGEYRRRLKREQLGIVKR</sequence>
<name>NOP10_THEON</name>
<gene>
    <name evidence="1" type="primary">nop10</name>
    <name type="ordered locus">TON_0238</name>
</gene>
<comment type="function">
    <text evidence="1">Involved in ribosome biogenesis; more specifically in 18S rRNA pseudouridylation and in cleavage of pre-rRNA.</text>
</comment>
<comment type="similarity">
    <text evidence="1">Belongs to the NOP10 family.</text>
</comment>
<protein>
    <recommendedName>
        <fullName evidence="1">Ribosome biogenesis protein Nop10</fullName>
    </recommendedName>
</protein>
<evidence type="ECO:0000255" key="1">
    <source>
        <dbReference type="HAMAP-Rule" id="MF_00803"/>
    </source>
</evidence>
<reference key="1">
    <citation type="journal article" date="2008" name="J. Bacteriol.">
        <title>The complete genome sequence of Thermococcus onnurineus NA1 reveals a mixed heterotrophic and carboxydotrophic metabolism.</title>
        <authorList>
            <person name="Lee H.S."/>
            <person name="Kang S.G."/>
            <person name="Bae S.S."/>
            <person name="Lim J.K."/>
            <person name="Cho Y."/>
            <person name="Kim Y.J."/>
            <person name="Jeon J.H."/>
            <person name="Cha S.-S."/>
            <person name="Kwon K.K."/>
            <person name="Kim H.-T."/>
            <person name="Park C.-J."/>
            <person name="Lee H.-W."/>
            <person name="Kim S.I."/>
            <person name="Chun J."/>
            <person name="Colwell R.R."/>
            <person name="Kim S.-J."/>
            <person name="Lee J.-H."/>
        </authorList>
    </citation>
    <scope>NUCLEOTIDE SEQUENCE [LARGE SCALE GENOMIC DNA]</scope>
    <source>
        <strain>NA1</strain>
    </source>
</reference>
<accession>B6YT36</accession>
<organism>
    <name type="scientific">Thermococcus onnurineus (strain NA1)</name>
    <dbReference type="NCBI Taxonomy" id="523850"/>
    <lineage>
        <taxon>Archaea</taxon>
        <taxon>Methanobacteriati</taxon>
        <taxon>Methanobacteriota</taxon>
        <taxon>Thermococci</taxon>
        <taxon>Thermococcales</taxon>
        <taxon>Thermococcaceae</taxon>
        <taxon>Thermococcus</taxon>
    </lineage>
</organism>